<name>RS3_BORAP</name>
<dbReference type="EMBL" id="CP000395">
    <property type="protein sequence ID" value="ABH01755.1"/>
    <property type="molecule type" value="Genomic_DNA"/>
</dbReference>
<dbReference type="EMBL" id="CP002933">
    <property type="protein sequence ID" value="AEL69709.1"/>
    <property type="molecule type" value="Genomic_DNA"/>
</dbReference>
<dbReference type="RefSeq" id="WP_004789365.1">
    <property type="nucleotide sequence ID" value="NZ_CP160066.1"/>
</dbReference>
<dbReference type="SMR" id="Q0SN23"/>
<dbReference type="STRING" id="29518.BLA32_01840"/>
<dbReference type="GeneID" id="77265331"/>
<dbReference type="KEGG" id="baf:BAPKO_0512"/>
<dbReference type="KEGG" id="bafz:BafPKo_0501"/>
<dbReference type="PATRIC" id="fig|390236.22.peg.481"/>
<dbReference type="eggNOG" id="COG0092">
    <property type="taxonomic scope" value="Bacteria"/>
</dbReference>
<dbReference type="HOGENOM" id="CLU_058591_0_2_12"/>
<dbReference type="OrthoDB" id="9806396at2"/>
<dbReference type="Proteomes" id="UP000005216">
    <property type="component" value="Chromosome"/>
</dbReference>
<dbReference type="GO" id="GO:0022627">
    <property type="term" value="C:cytosolic small ribosomal subunit"/>
    <property type="evidence" value="ECO:0007669"/>
    <property type="project" value="TreeGrafter"/>
</dbReference>
<dbReference type="GO" id="GO:0003729">
    <property type="term" value="F:mRNA binding"/>
    <property type="evidence" value="ECO:0007669"/>
    <property type="project" value="UniProtKB-UniRule"/>
</dbReference>
<dbReference type="GO" id="GO:0019843">
    <property type="term" value="F:rRNA binding"/>
    <property type="evidence" value="ECO:0007669"/>
    <property type="project" value="UniProtKB-UniRule"/>
</dbReference>
<dbReference type="GO" id="GO:0003735">
    <property type="term" value="F:structural constituent of ribosome"/>
    <property type="evidence" value="ECO:0007669"/>
    <property type="project" value="InterPro"/>
</dbReference>
<dbReference type="GO" id="GO:0006412">
    <property type="term" value="P:translation"/>
    <property type="evidence" value="ECO:0007669"/>
    <property type="project" value="UniProtKB-UniRule"/>
</dbReference>
<dbReference type="CDD" id="cd02412">
    <property type="entry name" value="KH-II_30S_S3"/>
    <property type="match status" value="1"/>
</dbReference>
<dbReference type="FunFam" id="3.30.300.20:FF:000001">
    <property type="entry name" value="30S ribosomal protein S3"/>
    <property type="match status" value="1"/>
</dbReference>
<dbReference type="Gene3D" id="3.30.300.20">
    <property type="match status" value="1"/>
</dbReference>
<dbReference type="Gene3D" id="3.30.1140.32">
    <property type="entry name" value="Ribosomal protein S3, C-terminal domain"/>
    <property type="match status" value="1"/>
</dbReference>
<dbReference type="HAMAP" id="MF_01309_B">
    <property type="entry name" value="Ribosomal_uS3_B"/>
    <property type="match status" value="1"/>
</dbReference>
<dbReference type="InterPro" id="IPR004087">
    <property type="entry name" value="KH_dom"/>
</dbReference>
<dbReference type="InterPro" id="IPR015946">
    <property type="entry name" value="KH_dom-like_a/b"/>
</dbReference>
<dbReference type="InterPro" id="IPR004044">
    <property type="entry name" value="KH_dom_type_2"/>
</dbReference>
<dbReference type="InterPro" id="IPR009019">
    <property type="entry name" value="KH_sf_prok-type"/>
</dbReference>
<dbReference type="InterPro" id="IPR036419">
    <property type="entry name" value="Ribosomal_S3_C_sf"/>
</dbReference>
<dbReference type="InterPro" id="IPR005704">
    <property type="entry name" value="Ribosomal_uS3_bac-typ"/>
</dbReference>
<dbReference type="InterPro" id="IPR001351">
    <property type="entry name" value="Ribosomal_uS3_C"/>
</dbReference>
<dbReference type="InterPro" id="IPR018280">
    <property type="entry name" value="Ribosomal_uS3_CS"/>
</dbReference>
<dbReference type="NCBIfam" id="TIGR01009">
    <property type="entry name" value="rpsC_bact"/>
    <property type="match status" value="1"/>
</dbReference>
<dbReference type="PANTHER" id="PTHR11760">
    <property type="entry name" value="30S/40S RIBOSOMAL PROTEIN S3"/>
    <property type="match status" value="1"/>
</dbReference>
<dbReference type="PANTHER" id="PTHR11760:SF19">
    <property type="entry name" value="SMALL RIBOSOMAL SUBUNIT PROTEIN US3C"/>
    <property type="match status" value="1"/>
</dbReference>
<dbReference type="Pfam" id="PF07650">
    <property type="entry name" value="KH_2"/>
    <property type="match status" value="1"/>
</dbReference>
<dbReference type="Pfam" id="PF00189">
    <property type="entry name" value="Ribosomal_S3_C"/>
    <property type="match status" value="1"/>
</dbReference>
<dbReference type="SMART" id="SM00322">
    <property type="entry name" value="KH"/>
    <property type="match status" value="1"/>
</dbReference>
<dbReference type="SUPFAM" id="SSF54814">
    <property type="entry name" value="Prokaryotic type KH domain (KH-domain type II)"/>
    <property type="match status" value="1"/>
</dbReference>
<dbReference type="SUPFAM" id="SSF54821">
    <property type="entry name" value="Ribosomal protein S3 C-terminal domain"/>
    <property type="match status" value="1"/>
</dbReference>
<dbReference type="PROSITE" id="PS50823">
    <property type="entry name" value="KH_TYPE_2"/>
    <property type="match status" value="1"/>
</dbReference>
<dbReference type="PROSITE" id="PS00548">
    <property type="entry name" value="RIBOSOMAL_S3"/>
    <property type="match status" value="1"/>
</dbReference>
<gene>
    <name evidence="1" type="primary">rpsC</name>
    <name type="ordered locus">BAPKO_0512</name>
    <name type="ordered locus">BafPKo_0501</name>
</gene>
<accession>Q0SN23</accession>
<accession>G0ISC8</accession>
<proteinExistence type="inferred from homology"/>
<keyword id="KW-0687">Ribonucleoprotein</keyword>
<keyword id="KW-0689">Ribosomal protein</keyword>
<keyword id="KW-0694">RNA-binding</keyword>
<keyword id="KW-0699">rRNA-binding</keyword>
<comment type="function">
    <text evidence="1">Binds the lower part of the 30S subunit head. Binds mRNA in the 70S ribosome, positioning it for translation.</text>
</comment>
<comment type="subunit">
    <text evidence="1">Part of the 30S ribosomal subunit. Forms a tight complex with proteins S10 and S14.</text>
</comment>
<comment type="similarity">
    <text evidence="1">Belongs to the universal ribosomal protein uS3 family.</text>
</comment>
<protein>
    <recommendedName>
        <fullName evidence="1">Small ribosomal subunit protein uS3</fullName>
    </recommendedName>
    <alternativeName>
        <fullName evidence="2">30S ribosomal protein S3</fullName>
    </alternativeName>
</protein>
<reference key="1">
    <citation type="journal article" date="2006" name="BMC Genomics">
        <title>Comparative genome analysis: selection pressure on the Borrelia vls cassettes is essential for infectivity.</title>
        <authorList>
            <person name="Gloeckner G."/>
            <person name="Schulte-Spechtel U."/>
            <person name="Schilhabel M."/>
            <person name="Felder M."/>
            <person name="Suehnel J."/>
            <person name="Wilske B."/>
            <person name="Platzer M."/>
        </authorList>
    </citation>
    <scope>NUCLEOTIDE SEQUENCE [LARGE SCALE GENOMIC DNA]</scope>
    <source>
        <strain>PKo</strain>
    </source>
</reference>
<reference key="2">
    <citation type="journal article" date="2011" name="J. Bacteriol.">
        <title>Whole-genome sequences of two Borrelia afzelii and two Borrelia garinii Lyme disease agent isolates.</title>
        <authorList>
            <person name="Casjens S.R."/>
            <person name="Mongodin E.F."/>
            <person name="Qiu W.G."/>
            <person name="Dunn J.J."/>
            <person name="Luft B.J."/>
            <person name="Fraser-Liggett C.M."/>
            <person name="Schutzer S.E."/>
        </authorList>
    </citation>
    <scope>NUCLEOTIDE SEQUENCE [LARGE SCALE GENOMIC DNA]</scope>
    <source>
        <strain>PKo</strain>
    </source>
</reference>
<evidence type="ECO:0000255" key="1">
    <source>
        <dbReference type="HAMAP-Rule" id="MF_01309"/>
    </source>
</evidence>
<evidence type="ECO:0000305" key="2"/>
<feature type="chain" id="PRO_0000293759" description="Small ribosomal subunit protein uS3">
    <location>
        <begin position="1"/>
        <end position="291"/>
    </location>
</feature>
<feature type="domain" description="KH type-2" evidence="1">
    <location>
        <begin position="39"/>
        <end position="110"/>
    </location>
</feature>
<organism>
    <name type="scientific">Borreliella afzelii (strain PKo)</name>
    <name type="common">Borrelia afzelii</name>
    <dbReference type="NCBI Taxonomy" id="390236"/>
    <lineage>
        <taxon>Bacteria</taxon>
        <taxon>Pseudomonadati</taxon>
        <taxon>Spirochaetota</taxon>
        <taxon>Spirochaetia</taxon>
        <taxon>Spirochaetales</taxon>
        <taxon>Borreliaceae</taxon>
        <taxon>Borreliella</taxon>
    </lineage>
</organism>
<sequence>MGQKVHPYSLRVKINKDWKSKWYFDKKLYSTILHEDFLIRLEIMKFLKGIKFDISDIEIIRNNPQKVTVVIVTPRPGSVIGLKGSNLEKIGQLLTKKISKKISIKIKEVKRPELDAQIIANGIAKQVENRVSYRKVLKSALSTSMLKGAQGLKIKIAGRLGGAEIARSFEVKEGRVPLHTLRANIDYGFSEAHTTYGIIGVKVWLFKGEVLGRQTNSDAGQVINKKPFRERGETVKNFDKILNNREKINEKQTRALNKKDGLSKDEASLLNKLSSSFSKERVDSNEQNIGG</sequence>